<comment type="function">
    <text evidence="1">Pyrophosphatase that catalyzes the hydrolysis of nucleoside triphosphates to their monophosphate derivatives, with a high preference for the non-canonical purine nucleotides XTP (xanthosine triphosphate), dITP (deoxyinosine triphosphate) and ITP. Seems to function as a house-cleaning enzyme that removes non-canonical purine nucleotides from the nucleotide pool, thus preventing their incorporation into DNA/RNA and avoiding chromosomal lesions.</text>
</comment>
<comment type="catalytic activity">
    <reaction evidence="1">
        <text>XTP + H2O = XMP + diphosphate + H(+)</text>
        <dbReference type="Rhea" id="RHEA:28610"/>
        <dbReference type="ChEBI" id="CHEBI:15377"/>
        <dbReference type="ChEBI" id="CHEBI:15378"/>
        <dbReference type="ChEBI" id="CHEBI:33019"/>
        <dbReference type="ChEBI" id="CHEBI:57464"/>
        <dbReference type="ChEBI" id="CHEBI:61314"/>
        <dbReference type="EC" id="3.6.1.66"/>
    </reaction>
</comment>
<comment type="catalytic activity">
    <reaction evidence="1">
        <text>dITP + H2O = dIMP + diphosphate + H(+)</text>
        <dbReference type="Rhea" id="RHEA:28342"/>
        <dbReference type="ChEBI" id="CHEBI:15377"/>
        <dbReference type="ChEBI" id="CHEBI:15378"/>
        <dbReference type="ChEBI" id="CHEBI:33019"/>
        <dbReference type="ChEBI" id="CHEBI:61194"/>
        <dbReference type="ChEBI" id="CHEBI:61382"/>
        <dbReference type="EC" id="3.6.1.66"/>
    </reaction>
</comment>
<comment type="catalytic activity">
    <reaction evidence="1">
        <text>ITP + H2O = IMP + diphosphate + H(+)</text>
        <dbReference type="Rhea" id="RHEA:29399"/>
        <dbReference type="ChEBI" id="CHEBI:15377"/>
        <dbReference type="ChEBI" id="CHEBI:15378"/>
        <dbReference type="ChEBI" id="CHEBI:33019"/>
        <dbReference type="ChEBI" id="CHEBI:58053"/>
        <dbReference type="ChEBI" id="CHEBI:61402"/>
        <dbReference type="EC" id="3.6.1.66"/>
    </reaction>
</comment>
<comment type="cofactor">
    <cofactor evidence="1">
        <name>Mg(2+)</name>
        <dbReference type="ChEBI" id="CHEBI:18420"/>
    </cofactor>
    <text evidence="1">Binds 1 Mg(2+) ion per subunit.</text>
</comment>
<comment type="subunit">
    <text evidence="1">Homodimer.</text>
</comment>
<comment type="similarity">
    <text evidence="1">Belongs to the HAM1 NTPase family.</text>
</comment>
<accession>A1WQF4</accession>
<feature type="chain" id="PRO_1000068433" description="dITP/XTP pyrophosphatase">
    <location>
        <begin position="1"/>
        <end position="199"/>
    </location>
</feature>
<feature type="active site" description="Proton acceptor" evidence="1">
    <location>
        <position position="68"/>
    </location>
</feature>
<feature type="binding site" evidence="1">
    <location>
        <begin position="7"/>
        <end position="12"/>
    </location>
    <ligand>
        <name>substrate</name>
    </ligand>
</feature>
<feature type="binding site" evidence="1">
    <location>
        <position position="68"/>
    </location>
    <ligand>
        <name>Mg(2+)</name>
        <dbReference type="ChEBI" id="CHEBI:18420"/>
    </ligand>
</feature>
<feature type="binding site" evidence="1">
    <location>
        <position position="69"/>
    </location>
    <ligand>
        <name>substrate</name>
    </ligand>
</feature>
<feature type="binding site" evidence="1">
    <location>
        <begin position="154"/>
        <end position="157"/>
    </location>
    <ligand>
        <name>substrate</name>
    </ligand>
</feature>
<feature type="binding site" evidence="1">
    <location>
        <position position="177"/>
    </location>
    <ligand>
        <name>substrate</name>
    </ligand>
</feature>
<feature type="binding site" evidence="1">
    <location>
        <begin position="182"/>
        <end position="183"/>
    </location>
    <ligand>
        <name>substrate</name>
    </ligand>
</feature>
<dbReference type="EC" id="3.6.1.66" evidence="1"/>
<dbReference type="EMBL" id="CP000542">
    <property type="protein sequence ID" value="ABM59861.1"/>
    <property type="molecule type" value="Genomic_DNA"/>
</dbReference>
<dbReference type="RefSeq" id="WP_011811848.1">
    <property type="nucleotide sequence ID" value="NC_008786.1"/>
</dbReference>
<dbReference type="SMR" id="A1WQF4"/>
<dbReference type="STRING" id="391735.Veis_4156"/>
<dbReference type="GeneID" id="76462492"/>
<dbReference type="KEGG" id="vei:Veis_4156"/>
<dbReference type="eggNOG" id="COG0127">
    <property type="taxonomic scope" value="Bacteria"/>
</dbReference>
<dbReference type="HOGENOM" id="CLU_082080_0_3_4"/>
<dbReference type="OrthoDB" id="9807456at2"/>
<dbReference type="Proteomes" id="UP000000374">
    <property type="component" value="Chromosome"/>
</dbReference>
<dbReference type="GO" id="GO:0005829">
    <property type="term" value="C:cytosol"/>
    <property type="evidence" value="ECO:0007669"/>
    <property type="project" value="TreeGrafter"/>
</dbReference>
<dbReference type="GO" id="GO:0035870">
    <property type="term" value="F:dITP diphosphatase activity"/>
    <property type="evidence" value="ECO:0007669"/>
    <property type="project" value="RHEA"/>
</dbReference>
<dbReference type="GO" id="GO:0036220">
    <property type="term" value="F:ITP diphosphatase activity"/>
    <property type="evidence" value="ECO:0007669"/>
    <property type="project" value="UniProtKB-EC"/>
</dbReference>
<dbReference type="GO" id="GO:0046872">
    <property type="term" value="F:metal ion binding"/>
    <property type="evidence" value="ECO:0007669"/>
    <property type="project" value="UniProtKB-KW"/>
</dbReference>
<dbReference type="GO" id="GO:0000166">
    <property type="term" value="F:nucleotide binding"/>
    <property type="evidence" value="ECO:0007669"/>
    <property type="project" value="UniProtKB-KW"/>
</dbReference>
<dbReference type="GO" id="GO:0017111">
    <property type="term" value="F:ribonucleoside triphosphate phosphatase activity"/>
    <property type="evidence" value="ECO:0007669"/>
    <property type="project" value="InterPro"/>
</dbReference>
<dbReference type="GO" id="GO:0036222">
    <property type="term" value="F:XTP diphosphatase activity"/>
    <property type="evidence" value="ECO:0007669"/>
    <property type="project" value="RHEA"/>
</dbReference>
<dbReference type="GO" id="GO:0009117">
    <property type="term" value="P:nucleotide metabolic process"/>
    <property type="evidence" value="ECO:0007669"/>
    <property type="project" value="UniProtKB-KW"/>
</dbReference>
<dbReference type="GO" id="GO:0009146">
    <property type="term" value="P:purine nucleoside triphosphate catabolic process"/>
    <property type="evidence" value="ECO:0007669"/>
    <property type="project" value="UniProtKB-UniRule"/>
</dbReference>
<dbReference type="CDD" id="cd00515">
    <property type="entry name" value="HAM1"/>
    <property type="match status" value="1"/>
</dbReference>
<dbReference type="FunFam" id="3.90.950.10:FF:000001">
    <property type="entry name" value="dITP/XTP pyrophosphatase"/>
    <property type="match status" value="1"/>
</dbReference>
<dbReference type="Gene3D" id="3.90.950.10">
    <property type="match status" value="1"/>
</dbReference>
<dbReference type="HAMAP" id="MF_01405">
    <property type="entry name" value="Non_canon_purine_NTPase"/>
    <property type="match status" value="1"/>
</dbReference>
<dbReference type="InterPro" id="IPR020922">
    <property type="entry name" value="dITP/XTP_pyrophosphatase"/>
</dbReference>
<dbReference type="InterPro" id="IPR029001">
    <property type="entry name" value="ITPase-like_fam"/>
</dbReference>
<dbReference type="InterPro" id="IPR002637">
    <property type="entry name" value="RdgB/HAM1"/>
</dbReference>
<dbReference type="NCBIfam" id="TIGR00042">
    <property type="entry name" value="RdgB/HAM1 family non-canonical purine NTP pyrophosphatase"/>
    <property type="match status" value="1"/>
</dbReference>
<dbReference type="PANTHER" id="PTHR11067:SF9">
    <property type="entry name" value="INOSINE TRIPHOSPHATE PYROPHOSPHATASE"/>
    <property type="match status" value="1"/>
</dbReference>
<dbReference type="PANTHER" id="PTHR11067">
    <property type="entry name" value="INOSINE TRIPHOSPHATE PYROPHOSPHATASE/HAM1 PROTEIN"/>
    <property type="match status" value="1"/>
</dbReference>
<dbReference type="Pfam" id="PF01725">
    <property type="entry name" value="Ham1p_like"/>
    <property type="match status" value="1"/>
</dbReference>
<dbReference type="SUPFAM" id="SSF52972">
    <property type="entry name" value="ITPase-like"/>
    <property type="match status" value="1"/>
</dbReference>
<evidence type="ECO:0000255" key="1">
    <source>
        <dbReference type="HAMAP-Rule" id="MF_01405"/>
    </source>
</evidence>
<sequence length="199" mass="21091">MKIVLASNNPGKLAELQTMLAPLGVELQRQADLGVGQAAEPFRTFVENALAKARFAAAHTGLPALADDAGLCVDAFGGLPGVDTADYATRFGHARGEANNVRALLEQMQGIDERRAALVSTLVAVRSPDDPEPLIAVGRVVGQITRAPRGSNGFGFDPVLLLPGLGKTFAELPAEVKNAHSHRGRAAQQMLALLRERWL</sequence>
<proteinExistence type="inferred from homology"/>
<keyword id="KW-0378">Hydrolase</keyword>
<keyword id="KW-0460">Magnesium</keyword>
<keyword id="KW-0479">Metal-binding</keyword>
<keyword id="KW-0546">Nucleotide metabolism</keyword>
<keyword id="KW-0547">Nucleotide-binding</keyword>
<keyword id="KW-1185">Reference proteome</keyword>
<name>IXTPA_VEREI</name>
<reference key="1">
    <citation type="submission" date="2006-12" db="EMBL/GenBank/DDBJ databases">
        <title>Complete sequence of chromosome 1 of Verminephrobacter eiseniae EF01-2.</title>
        <authorList>
            <person name="Copeland A."/>
            <person name="Lucas S."/>
            <person name="Lapidus A."/>
            <person name="Barry K."/>
            <person name="Detter J.C."/>
            <person name="Glavina del Rio T."/>
            <person name="Dalin E."/>
            <person name="Tice H."/>
            <person name="Pitluck S."/>
            <person name="Chertkov O."/>
            <person name="Brettin T."/>
            <person name="Bruce D."/>
            <person name="Han C."/>
            <person name="Tapia R."/>
            <person name="Gilna P."/>
            <person name="Schmutz J."/>
            <person name="Larimer F."/>
            <person name="Land M."/>
            <person name="Hauser L."/>
            <person name="Kyrpides N."/>
            <person name="Kim E."/>
            <person name="Stahl D."/>
            <person name="Richardson P."/>
        </authorList>
    </citation>
    <scope>NUCLEOTIDE SEQUENCE [LARGE SCALE GENOMIC DNA]</scope>
    <source>
        <strain>EF01-2</strain>
    </source>
</reference>
<protein>
    <recommendedName>
        <fullName evidence="1">dITP/XTP pyrophosphatase</fullName>
        <ecNumber evidence="1">3.6.1.66</ecNumber>
    </recommendedName>
    <alternativeName>
        <fullName evidence="1">Non-canonical purine NTP pyrophosphatase</fullName>
    </alternativeName>
    <alternativeName>
        <fullName evidence="1">Non-standard purine NTP pyrophosphatase</fullName>
    </alternativeName>
    <alternativeName>
        <fullName evidence="1">Nucleoside-triphosphate diphosphatase</fullName>
    </alternativeName>
    <alternativeName>
        <fullName evidence="1">Nucleoside-triphosphate pyrophosphatase</fullName>
        <shortName evidence="1">NTPase</shortName>
    </alternativeName>
</protein>
<organism>
    <name type="scientific">Verminephrobacter eiseniae (strain EF01-2)</name>
    <dbReference type="NCBI Taxonomy" id="391735"/>
    <lineage>
        <taxon>Bacteria</taxon>
        <taxon>Pseudomonadati</taxon>
        <taxon>Pseudomonadota</taxon>
        <taxon>Betaproteobacteria</taxon>
        <taxon>Burkholderiales</taxon>
        <taxon>Comamonadaceae</taxon>
        <taxon>Verminephrobacter</taxon>
    </lineage>
</organism>
<gene>
    <name type="ordered locus">Veis_4156</name>
</gene>